<feature type="chain" id="PRO_0000356789" description="Large ribosomal subunit protein bL33c">
    <location>
        <begin position="1"/>
        <end position="66"/>
    </location>
</feature>
<name>RK33_CARPA</name>
<organism>
    <name type="scientific">Carica papaya</name>
    <name type="common">Papaya</name>
    <dbReference type="NCBI Taxonomy" id="3649"/>
    <lineage>
        <taxon>Eukaryota</taxon>
        <taxon>Viridiplantae</taxon>
        <taxon>Streptophyta</taxon>
        <taxon>Embryophyta</taxon>
        <taxon>Tracheophyta</taxon>
        <taxon>Spermatophyta</taxon>
        <taxon>Magnoliopsida</taxon>
        <taxon>eudicotyledons</taxon>
        <taxon>Gunneridae</taxon>
        <taxon>Pentapetalae</taxon>
        <taxon>rosids</taxon>
        <taxon>malvids</taxon>
        <taxon>Brassicales</taxon>
        <taxon>Caricaceae</taxon>
        <taxon>Carica</taxon>
    </lineage>
</organism>
<gene>
    <name evidence="1" type="primary">rpl33</name>
</gene>
<comment type="subcellular location">
    <subcellularLocation>
        <location>Plastid</location>
        <location>Chloroplast</location>
    </subcellularLocation>
</comment>
<comment type="similarity">
    <text evidence="1">Belongs to the bacterial ribosomal protein bL33 family.</text>
</comment>
<sequence length="66" mass="7624">MAKGKDARVTIILECTSCVRNGVNKESTGISRYITQKNRHNTPSRLELRKFCPYCYKHTIHGEIKK</sequence>
<accession>B1A956</accession>
<protein>
    <recommendedName>
        <fullName evidence="1">Large ribosomal subunit protein bL33c</fullName>
    </recommendedName>
    <alternativeName>
        <fullName evidence="2">50S ribosomal protein L33, chloroplastic</fullName>
    </alternativeName>
</protein>
<keyword id="KW-0150">Chloroplast</keyword>
<keyword id="KW-0934">Plastid</keyword>
<keyword id="KW-0687">Ribonucleoprotein</keyword>
<keyword id="KW-0689">Ribosomal protein</keyword>
<dbReference type="EMBL" id="EU431223">
    <property type="protein sequence ID" value="ABY86803.1"/>
    <property type="molecule type" value="Genomic_DNA"/>
</dbReference>
<dbReference type="RefSeq" id="YP_001671704.1">
    <property type="nucleotide sequence ID" value="NC_010323.1"/>
</dbReference>
<dbReference type="GeneID" id="5878389"/>
<dbReference type="KEGG" id="cpap:5878389"/>
<dbReference type="OrthoDB" id="361870at2759"/>
<dbReference type="GO" id="GO:0009507">
    <property type="term" value="C:chloroplast"/>
    <property type="evidence" value="ECO:0007669"/>
    <property type="project" value="UniProtKB-SubCell"/>
</dbReference>
<dbReference type="GO" id="GO:1990904">
    <property type="term" value="C:ribonucleoprotein complex"/>
    <property type="evidence" value="ECO:0007669"/>
    <property type="project" value="UniProtKB-KW"/>
</dbReference>
<dbReference type="GO" id="GO:0005840">
    <property type="term" value="C:ribosome"/>
    <property type="evidence" value="ECO:0007669"/>
    <property type="project" value="UniProtKB-KW"/>
</dbReference>
<dbReference type="GO" id="GO:0003735">
    <property type="term" value="F:structural constituent of ribosome"/>
    <property type="evidence" value="ECO:0007669"/>
    <property type="project" value="InterPro"/>
</dbReference>
<dbReference type="GO" id="GO:0006412">
    <property type="term" value="P:translation"/>
    <property type="evidence" value="ECO:0007669"/>
    <property type="project" value="UniProtKB-UniRule"/>
</dbReference>
<dbReference type="FunFam" id="2.20.28.120:FF:000004">
    <property type="entry name" value="50S ribosomal protein L33, chloroplastic"/>
    <property type="match status" value="1"/>
</dbReference>
<dbReference type="Gene3D" id="2.20.28.120">
    <property type="entry name" value="Ribosomal protein L33"/>
    <property type="match status" value="1"/>
</dbReference>
<dbReference type="HAMAP" id="MF_00294">
    <property type="entry name" value="Ribosomal_bL33"/>
    <property type="match status" value="1"/>
</dbReference>
<dbReference type="InterPro" id="IPR001705">
    <property type="entry name" value="Ribosomal_bL33"/>
</dbReference>
<dbReference type="InterPro" id="IPR018264">
    <property type="entry name" value="Ribosomal_bL33_CS"/>
</dbReference>
<dbReference type="InterPro" id="IPR038584">
    <property type="entry name" value="Ribosomal_bL33_sf"/>
</dbReference>
<dbReference type="InterPro" id="IPR011332">
    <property type="entry name" value="Ribosomal_zn-bd"/>
</dbReference>
<dbReference type="NCBIfam" id="NF001764">
    <property type="entry name" value="PRK00504.1"/>
    <property type="match status" value="1"/>
</dbReference>
<dbReference type="NCBIfam" id="NF001860">
    <property type="entry name" value="PRK00595.1"/>
    <property type="match status" value="1"/>
</dbReference>
<dbReference type="NCBIfam" id="TIGR01023">
    <property type="entry name" value="rpmG_bact"/>
    <property type="match status" value="1"/>
</dbReference>
<dbReference type="PANTHER" id="PTHR43168">
    <property type="entry name" value="50S RIBOSOMAL PROTEIN L33, CHLOROPLASTIC"/>
    <property type="match status" value="1"/>
</dbReference>
<dbReference type="PANTHER" id="PTHR43168:SF2">
    <property type="entry name" value="LARGE RIBOSOMAL SUBUNIT PROTEIN BL33C"/>
    <property type="match status" value="1"/>
</dbReference>
<dbReference type="Pfam" id="PF00471">
    <property type="entry name" value="Ribosomal_L33"/>
    <property type="match status" value="1"/>
</dbReference>
<dbReference type="SUPFAM" id="SSF57829">
    <property type="entry name" value="Zn-binding ribosomal proteins"/>
    <property type="match status" value="1"/>
</dbReference>
<dbReference type="PROSITE" id="PS00582">
    <property type="entry name" value="RIBOSOMAL_L33"/>
    <property type="match status" value="1"/>
</dbReference>
<evidence type="ECO:0000255" key="1">
    <source>
        <dbReference type="HAMAP-Rule" id="MF_00294"/>
    </source>
</evidence>
<evidence type="ECO:0000305" key="2"/>
<proteinExistence type="inferred from homology"/>
<geneLocation type="chloroplast"/>
<reference key="1">
    <citation type="journal article" date="2008" name="Nature">
        <title>The draft genome of the transgenic tropical fruit tree papaya (Carica papaya Linnaeus).</title>
        <authorList>
            <person name="Ming R."/>
            <person name="Hou S."/>
            <person name="Feng Y."/>
            <person name="Yu Q."/>
            <person name="Dionne-Laporte A."/>
            <person name="Saw J.H."/>
            <person name="Senin P."/>
            <person name="Wang W."/>
            <person name="Ly B.V."/>
            <person name="Lewis K.L."/>
            <person name="Salzberg S.L."/>
            <person name="Feng L."/>
            <person name="Jones M.R."/>
            <person name="Skelton R.L."/>
            <person name="Murray J.E."/>
            <person name="Chen C."/>
            <person name="Qian W."/>
            <person name="Shen J."/>
            <person name="Du P."/>
            <person name="Eustice M."/>
            <person name="Tong E."/>
            <person name="Tang H."/>
            <person name="Lyons E."/>
            <person name="Paull R.E."/>
            <person name="Michael T.P."/>
            <person name="Wall K."/>
            <person name="Rice D.W."/>
            <person name="Albert H."/>
            <person name="Wang M.L."/>
            <person name="Zhu Y.J."/>
            <person name="Schatz M."/>
            <person name="Nagarajan N."/>
            <person name="Acob R.A."/>
            <person name="Guan P."/>
            <person name="Blas A."/>
            <person name="Wai C.M."/>
            <person name="Ackerman C.M."/>
            <person name="Ren Y."/>
            <person name="Liu C."/>
            <person name="Wang J."/>
            <person name="Wang J."/>
            <person name="Na J.K."/>
            <person name="Shakirov E.V."/>
            <person name="Haas B."/>
            <person name="Thimmapuram J."/>
            <person name="Nelson D."/>
            <person name="Wang X."/>
            <person name="Bowers J.E."/>
            <person name="Gschwend A.R."/>
            <person name="Delcher A.L."/>
            <person name="Singh R."/>
            <person name="Suzuki J.Y."/>
            <person name="Tripathi S."/>
            <person name="Neupane K."/>
            <person name="Wei H."/>
            <person name="Irikura B."/>
            <person name="Paidi M."/>
            <person name="Jiang N."/>
            <person name="Zhang W."/>
            <person name="Presting G."/>
            <person name="Windsor A."/>
            <person name="Navajas-Perez R."/>
            <person name="Torres M.J."/>
            <person name="Feltus F.A."/>
            <person name="Porter B."/>
            <person name="Li Y."/>
            <person name="Burroughs A.M."/>
            <person name="Luo M.C."/>
            <person name="Liu L."/>
            <person name="Christopher D.A."/>
            <person name="Mount S.M."/>
            <person name="Moore P.H."/>
            <person name="Sugimura T."/>
            <person name="Jiang J."/>
            <person name="Schuler M.A."/>
            <person name="Friedman V."/>
            <person name="Mitchell-Olds T."/>
            <person name="Shippen D.E."/>
            <person name="dePamphilis C.W."/>
            <person name="Palmer J.D."/>
            <person name="Freeling M."/>
            <person name="Paterson A.H."/>
            <person name="Gonsalves D."/>
            <person name="Wang L."/>
            <person name="Alam M."/>
        </authorList>
    </citation>
    <scope>NUCLEOTIDE SEQUENCE [LARGE SCALE GENOMIC DNA]</scope>
    <source>
        <strain>cv. SunUp</strain>
    </source>
</reference>